<protein>
    <recommendedName>
        <fullName evidence="1">Ribosomal protein uS12 methylthiotransferase RimO</fullName>
        <shortName evidence="1">uS12 MTTase</shortName>
        <shortName evidence="1">uS12 methylthiotransferase</shortName>
        <ecNumber evidence="1">2.8.4.4</ecNumber>
    </recommendedName>
    <alternativeName>
        <fullName evidence="1">Ribosomal protein uS12 (aspartate-C(3))-methylthiotransferase</fullName>
    </alternativeName>
    <alternativeName>
        <fullName evidence="1">Ribosome maturation factor RimO</fullName>
    </alternativeName>
</protein>
<proteinExistence type="inferred from homology"/>
<name>RIMO_PARPJ</name>
<comment type="function">
    <text evidence="1">Catalyzes the methylthiolation of an aspartic acid residue of ribosomal protein uS12.</text>
</comment>
<comment type="catalytic activity">
    <reaction evidence="1">
        <text>L-aspartate(89)-[ribosomal protein uS12]-hydrogen + (sulfur carrier)-SH + AH2 + 2 S-adenosyl-L-methionine = 3-methylsulfanyl-L-aspartate(89)-[ribosomal protein uS12]-hydrogen + (sulfur carrier)-H + 5'-deoxyadenosine + L-methionine + A + S-adenosyl-L-homocysteine + 2 H(+)</text>
        <dbReference type="Rhea" id="RHEA:37087"/>
        <dbReference type="Rhea" id="RHEA-COMP:10460"/>
        <dbReference type="Rhea" id="RHEA-COMP:10461"/>
        <dbReference type="Rhea" id="RHEA-COMP:14737"/>
        <dbReference type="Rhea" id="RHEA-COMP:14739"/>
        <dbReference type="ChEBI" id="CHEBI:13193"/>
        <dbReference type="ChEBI" id="CHEBI:15378"/>
        <dbReference type="ChEBI" id="CHEBI:17319"/>
        <dbReference type="ChEBI" id="CHEBI:17499"/>
        <dbReference type="ChEBI" id="CHEBI:29917"/>
        <dbReference type="ChEBI" id="CHEBI:29961"/>
        <dbReference type="ChEBI" id="CHEBI:57844"/>
        <dbReference type="ChEBI" id="CHEBI:57856"/>
        <dbReference type="ChEBI" id="CHEBI:59789"/>
        <dbReference type="ChEBI" id="CHEBI:64428"/>
        <dbReference type="ChEBI" id="CHEBI:73599"/>
        <dbReference type="EC" id="2.8.4.4"/>
    </reaction>
</comment>
<comment type="cofactor">
    <cofactor evidence="1">
        <name>[4Fe-4S] cluster</name>
        <dbReference type="ChEBI" id="CHEBI:49883"/>
    </cofactor>
    <text evidence="1">Binds 2 [4Fe-4S] clusters. One cluster is coordinated with 3 cysteines and an exchangeable S-adenosyl-L-methionine.</text>
</comment>
<comment type="subcellular location">
    <subcellularLocation>
        <location evidence="1">Cytoplasm</location>
    </subcellularLocation>
</comment>
<comment type="similarity">
    <text evidence="1">Belongs to the methylthiotransferase family. RimO subfamily.</text>
</comment>
<gene>
    <name evidence="1" type="primary">rimO</name>
    <name type="ordered locus">Bphyt_1848</name>
</gene>
<keyword id="KW-0004">4Fe-4S</keyword>
<keyword id="KW-0963">Cytoplasm</keyword>
<keyword id="KW-0408">Iron</keyword>
<keyword id="KW-0411">Iron-sulfur</keyword>
<keyword id="KW-0479">Metal-binding</keyword>
<keyword id="KW-0949">S-adenosyl-L-methionine</keyword>
<keyword id="KW-0808">Transferase</keyword>
<feature type="chain" id="PRO_0000374740" description="Ribosomal protein uS12 methylthiotransferase RimO">
    <location>
        <begin position="1"/>
        <end position="461"/>
    </location>
</feature>
<feature type="domain" description="MTTase N-terminal" evidence="1">
    <location>
        <begin position="13"/>
        <end position="128"/>
    </location>
</feature>
<feature type="domain" description="Radical SAM core" evidence="2">
    <location>
        <begin position="145"/>
        <end position="390"/>
    </location>
</feature>
<feature type="domain" description="TRAM" evidence="1">
    <location>
        <begin position="393"/>
        <end position="461"/>
    </location>
</feature>
<feature type="binding site" evidence="1">
    <location>
        <position position="22"/>
    </location>
    <ligand>
        <name>[4Fe-4S] cluster</name>
        <dbReference type="ChEBI" id="CHEBI:49883"/>
        <label>1</label>
    </ligand>
</feature>
<feature type="binding site" evidence="1">
    <location>
        <position position="58"/>
    </location>
    <ligand>
        <name>[4Fe-4S] cluster</name>
        <dbReference type="ChEBI" id="CHEBI:49883"/>
        <label>1</label>
    </ligand>
</feature>
<feature type="binding site" evidence="1">
    <location>
        <position position="87"/>
    </location>
    <ligand>
        <name>[4Fe-4S] cluster</name>
        <dbReference type="ChEBI" id="CHEBI:49883"/>
        <label>1</label>
    </ligand>
</feature>
<feature type="binding site" evidence="1">
    <location>
        <position position="159"/>
    </location>
    <ligand>
        <name>[4Fe-4S] cluster</name>
        <dbReference type="ChEBI" id="CHEBI:49883"/>
        <label>2</label>
        <note>4Fe-4S-S-AdoMet</note>
    </ligand>
</feature>
<feature type="binding site" evidence="1">
    <location>
        <position position="163"/>
    </location>
    <ligand>
        <name>[4Fe-4S] cluster</name>
        <dbReference type="ChEBI" id="CHEBI:49883"/>
        <label>2</label>
        <note>4Fe-4S-S-AdoMet</note>
    </ligand>
</feature>
<feature type="binding site" evidence="1">
    <location>
        <position position="166"/>
    </location>
    <ligand>
        <name>[4Fe-4S] cluster</name>
        <dbReference type="ChEBI" id="CHEBI:49883"/>
        <label>2</label>
        <note>4Fe-4S-S-AdoMet</note>
    </ligand>
</feature>
<evidence type="ECO:0000255" key="1">
    <source>
        <dbReference type="HAMAP-Rule" id="MF_01865"/>
    </source>
</evidence>
<evidence type="ECO:0000255" key="2">
    <source>
        <dbReference type="PROSITE-ProRule" id="PRU01266"/>
    </source>
</evidence>
<organism>
    <name type="scientific">Paraburkholderia phytofirmans (strain DSM 17436 / LMG 22146 / PsJN)</name>
    <name type="common">Burkholderia phytofirmans</name>
    <dbReference type="NCBI Taxonomy" id="398527"/>
    <lineage>
        <taxon>Bacteria</taxon>
        <taxon>Pseudomonadati</taxon>
        <taxon>Pseudomonadota</taxon>
        <taxon>Betaproteobacteria</taxon>
        <taxon>Burkholderiales</taxon>
        <taxon>Burkholderiaceae</taxon>
        <taxon>Paraburkholderia</taxon>
    </lineage>
</organism>
<reference key="1">
    <citation type="journal article" date="2011" name="J. Bacteriol.">
        <title>Complete genome sequence of the plant growth-promoting endophyte Burkholderia phytofirmans strain PsJN.</title>
        <authorList>
            <person name="Weilharter A."/>
            <person name="Mitter B."/>
            <person name="Shin M.V."/>
            <person name="Chain P.S."/>
            <person name="Nowak J."/>
            <person name="Sessitsch A."/>
        </authorList>
    </citation>
    <scope>NUCLEOTIDE SEQUENCE [LARGE SCALE GENOMIC DNA]</scope>
    <source>
        <strain>DSM 17436 / LMG 22146 / PsJN</strain>
    </source>
</reference>
<sequence length="461" mass="50210">MSATPPIVPTATPKVGFVSLGCPKALVDSEQIITQLRAEGYEISGTYDGADLVVVNTCGFIDEAVQESLDAIGEALNENGKVIVTGCLGAKKSASGSGLIEEVHPKVLAVTGPHALGEVMQHVHTHLPKPHDPFVDLVPAAGVKLTPRHYAYLKISEGCNHRCTFCIIPSMRGDLVSRPVADVMLEAENLFKSGVKELLVISQDTSAYGVDVKYRTGFWNGKPIKTRMTDLVGALGELAAQYGAWVRLHYVYPYPSVDEVIPMMAEGPYKGHVLPYLDVPFQHAHPEVLKRMKRPANAEKVMERVKKWREMCPDLTIRSTFIAGFPGETEEQFQTLLDFIREAELDRVGCFAYSPVEGATANELDGALPDEVREERRARFMEVAEEVSAKRIAKKVGKTLKVLVDEINADGGIGRTAADAPEIDGVVYIAPAAKASKRYKVGDFVSVKITGADGHDLWGEV</sequence>
<dbReference type="EC" id="2.8.4.4" evidence="1"/>
<dbReference type="EMBL" id="CP001052">
    <property type="protein sequence ID" value="ACD16256.1"/>
    <property type="molecule type" value="Genomic_DNA"/>
</dbReference>
<dbReference type="RefSeq" id="WP_012432859.1">
    <property type="nucleotide sequence ID" value="NC_010681.1"/>
</dbReference>
<dbReference type="SMR" id="B2T3U5"/>
<dbReference type="STRING" id="398527.Bphyt_1848"/>
<dbReference type="KEGG" id="bpy:Bphyt_1848"/>
<dbReference type="eggNOG" id="COG0621">
    <property type="taxonomic scope" value="Bacteria"/>
</dbReference>
<dbReference type="HOGENOM" id="CLU_018697_0_0_4"/>
<dbReference type="OrthoDB" id="9805215at2"/>
<dbReference type="Proteomes" id="UP000001739">
    <property type="component" value="Chromosome 1"/>
</dbReference>
<dbReference type="GO" id="GO:0005829">
    <property type="term" value="C:cytosol"/>
    <property type="evidence" value="ECO:0007669"/>
    <property type="project" value="TreeGrafter"/>
</dbReference>
<dbReference type="GO" id="GO:0051539">
    <property type="term" value="F:4 iron, 4 sulfur cluster binding"/>
    <property type="evidence" value="ECO:0007669"/>
    <property type="project" value="UniProtKB-UniRule"/>
</dbReference>
<dbReference type="GO" id="GO:0035599">
    <property type="term" value="F:aspartic acid methylthiotransferase activity"/>
    <property type="evidence" value="ECO:0007669"/>
    <property type="project" value="TreeGrafter"/>
</dbReference>
<dbReference type="GO" id="GO:0046872">
    <property type="term" value="F:metal ion binding"/>
    <property type="evidence" value="ECO:0007669"/>
    <property type="project" value="UniProtKB-KW"/>
</dbReference>
<dbReference type="GO" id="GO:0103039">
    <property type="term" value="F:protein methylthiotransferase activity"/>
    <property type="evidence" value="ECO:0007669"/>
    <property type="project" value="UniProtKB-EC"/>
</dbReference>
<dbReference type="GO" id="GO:0006400">
    <property type="term" value="P:tRNA modification"/>
    <property type="evidence" value="ECO:0007669"/>
    <property type="project" value="InterPro"/>
</dbReference>
<dbReference type="CDD" id="cd01335">
    <property type="entry name" value="Radical_SAM"/>
    <property type="match status" value="1"/>
</dbReference>
<dbReference type="FunFam" id="2.40.50.140:FF:000210">
    <property type="entry name" value="Ribosomal protein S12 methylthiotransferase RimO"/>
    <property type="match status" value="1"/>
</dbReference>
<dbReference type="FunFam" id="3.40.50.12160:FF:000002">
    <property type="entry name" value="Ribosomal protein S12 methylthiotransferase RimO"/>
    <property type="match status" value="1"/>
</dbReference>
<dbReference type="FunFam" id="3.80.30.20:FF:000001">
    <property type="entry name" value="tRNA-2-methylthio-N(6)-dimethylallyladenosine synthase 2"/>
    <property type="match status" value="1"/>
</dbReference>
<dbReference type="Gene3D" id="3.40.50.12160">
    <property type="entry name" value="Methylthiotransferase, N-terminal domain"/>
    <property type="match status" value="1"/>
</dbReference>
<dbReference type="Gene3D" id="2.40.50.140">
    <property type="entry name" value="Nucleic acid-binding proteins"/>
    <property type="match status" value="1"/>
</dbReference>
<dbReference type="Gene3D" id="3.80.30.20">
    <property type="entry name" value="tm_1862 like domain"/>
    <property type="match status" value="1"/>
</dbReference>
<dbReference type="HAMAP" id="MF_01865">
    <property type="entry name" value="MTTase_RimO"/>
    <property type="match status" value="1"/>
</dbReference>
<dbReference type="InterPro" id="IPR006638">
    <property type="entry name" value="Elp3/MiaA/NifB-like_rSAM"/>
</dbReference>
<dbReference type="InterPro" id="IPR005839">
    <property type="entry name" value="Methylthiotransferase"/>
</dbReference>
<dbReference type="InterPro" id="IPR020612">
    <property type="entry name" value="Methylthiotransferase_CS"/>
</dbReference>
<dbReference type="InterPro" id="IPR013848">
    <property type="entry name" value="Methylthiotransferase_N"/>
</dbReference>
<dbReference type="InterPro" id="IPR038135">
    <property type="entry name" value="Methylthiotransferase_N_sf"/>
</dbReference>
<dbReference type="InterPro" id="IPR012340">
    <property type="entry name" value="NA-bd_OB-fold"/>
</dbReference>
<dbReference type="InterPro" id="IPR005840">
    <property type="entry name" value="Ribosomal_uS12_MeSTrfase_RimO"/>
</dbReference>
<dbReference type="InterPro" id="IPR007197">
    <property type="entry name" value="rSAM"/>
</dbReference>
<dbReference type="InterPro" id="IPR023404">
    <property type="entry name" value="rSAM_horseshoe"/>
</dbReference>
<dbReference type="InterPro" id="IPR002792">
    <property type="entry name" value="TRAM_dom"/>
</dbReference>
<dbReference type="NCBIfam" id="TIGR01125">
    <property type="entry name" value="30S ribosomal protein S12 methylthiotransferase RimO"/>
    <property type="match status" value="1"/>
</dbReference>
<dbReference type="NCBIfam" id="TIGR00089">
    <property type="entry name" value="MiaB/RimO family radical SAM methylthiotransferase"/>
    <property type="match status" value="1"/>
</dbReference>
<dbReference type="PANTHER" id="PTHR43837">
    <property type="entry name" value="RIBOSOMAL PROTEIN S12 METHYLTHIOTRANSFERASE RIMO"/>
    <property type="match status" value="1"/>
</dbReference>
<dbReference type="PANTHER" id="PTHR43837:SF1">
    <property type="entry name" value="RIBOSOMAL PROTEIN US12 METHYLTHIOTRANSFERASE RIMO"/>
    <property type="match status" value="1"/>
</dbReference>
<dbReference type="Pfam" id="PF04055">
    <property type="entry name" value="Radical_SAM"/>
    <property type="match status" value="1"/>
</dbReference>
<dbReference type="Pfam" id="PF18693">
    <property type="entry name" value="TRAM_2"/>
    <property type="match status" value="1"/>
</dbReference>
<dbReference type="Pfam" id="PF00919">
    <property type="entry name" value="UPF0004"/>
    <property type="match status" value="1"/>
</dbReference>
<dbReference type="SFLD" id="SFLDG01082">
    <property type="entry name" value="B12-binding_domain_containing"/>
    <property type="match status" value="1"/>
</dbReference>
<dbReference type="SFLD" id="SFLDS00029">
    <property type="entry name" value="Radical_SAM"/>
    <property type="match status" value="1"/>
</dbReference>
<dbReference type="SFLD" id="SFLDF00274">
    <property type="entry name" value="ribosomal_protein_S12_methylth"/>
    <property type="match status" value="1"/>
</dbReference>
<dbReference type="SMART" id="SM00729">
    <property type="entry name" value="Elp3"/>
    <property type="match status" value="1"/>
</dbReference>
<dbReference type="SUPFAM" id="SSF102114">
    <property type="entry name" value="Radical SAM enzymes"/>
    <property type="match status" value="1"/>
</dbReference>
<dbReference type="PROSITE" id="PS51449">
    <property type="entry name" value="MTTASE_N"/>
    <property type="match status" value="1"/>
</dbReference>
<dbReference type="PROSITE" id="PS01278">
    <property type="entry name" value="MTTASE_RADICAL"/>
    <property type="match status" value="1"/>
</dbReference>
<dbReference type="PROSITE" id="PS51918">
    <property type="entry name" value="RADICAL_SAM"/>
    <property type="match status" value="1"/>
</dbReference>
<dbReference type="PROSITE" id="PS50926">
    <property type="entry name" value="TRAM"/>
    <property type="match status" value="1"/>
</dbReference>
<accession>B2T3U5</accession>